<evidence type="ECO:0000250" key="1"/>
<evidence type="ECO:0000269" key="2">
    <source>
    </source>
</evidence>
<evidence type="ECO:0000305" key="3"/>
<feature type="signal peptide" evidence="1">
    <location>
        <begin position="1"/>
        <end position="22"/>
    </location>
</feature>
<feature type="propeptide" id="PRO_0000020166" evidence="1">
    <location>
        <begin position="23"/>
        <end position="40"/>
    </location>
</feature>
<feature type="chain" id="PRO_0000020167" description="Large cysteine-rich periplasmic protein omcB-alpha">
    <location>
        <begin position="41"/>
        <end position="557"/>
    </location>
</feature>
<feature type="chain" id="PRO_0000248870" description="Large cysteine-rich periplasmic protein omcB-beta">
    <location>
        <begin position="58"/>
        <end position="557"/>
    </location>
</feature>
<organism>
    <name type="scientific">Chlamydia psittaci</name>
    <name type="common">Chlamydophila psittaci</name>
    <dbReference type="NCBI Taxonomy" id="83554"/>
    <lineage>
        <taxon>Bacteria</taxon>
        <taxon>Pseudomonadati</taxon>
        <taxon>Chlamydiota</taxon>
        <taxon>Chlamydiia</taxon>
        <taxon>Chlamydiales</taxon>
        <taxon>Chlamydiaceae</taxon>
        <taxon>Chlamydia/Chlamydophila group</taxon>
        <taxon>Chlamydia</taxon>
    </lineage>
</organism>
<dbReference type="EMBL" id="X53512">
    <property type="protein sequence ID" value="CAA37592.1"/>
    <property type="molecule type" value="Genomic_DNA"/>
</dbReference>
<dbReference type="PIR" id="B39439">
    <property type="entry name" value="B39439"/>
</dbReference>
<dbReference type="RefSeq" id="WP_014947026.1">
    <property type="nucleotide sequence ID" value="NZ_JALPMD010000003.1"/>
</dbReference>
<dbReference type="STRING" id="331636.G5O_0210"/>
<dbReference type="eggNOG" id="COG1361">
    <property type="taxonomic scope" value="Bacteria"/>
</dbReference>
<dbReference type="GO" id="GO:0042597">
    <property type="term" value="C:periplasmic space"/>
    <property type="evidence" value="ECO:0007669"/>
    <property type="project" value="UniProtKB-SubCell"/>
</dbReference>
<dbReference type="GO" id="GO:0005201">
    <property type="term" value="F:extracellular matrix structural constituent"/>
    <property type="evidence" value="ECO:0007669"/>
    <property type="project" value="InterPro"/>
</dbReference>
<dbReference type="GO" id="GO:0008360">
    <property type="term" value="P:regulation of cell shape"/>
    <property type="evidence" value="ECO:0007669"/>
    <property type="project" value="UniProtKB-KW"/>
</dbReference>
<dbReference type="InterPro" id="IPR003506">
    <property type="entry name" value="Chlam_OMP6"/>
</dbReference>
<dbReference type="InterPro" id="IPR051172">
    <property type="entry name" value="Chlamydia_OmcB"/>
</dbReference>
<dbReference type="InterPro" id="IPR047589">
    <property type="entry name" value="DUF11_rpt"/>
</dbReference>
<dbReference type="InterPro" id="IPR001434">
    <property type="entry name" value="OmcB-like_DUF11"/>
</dbReference>
<dbReference type="NCBIfam" id="TIGR01451">
    <property type="entry name" value="B_ant_repeat"/>
    <property type="match status" value="1"/>
</dbReference>
<dbReference type="PANTHER" id="PTHR34819">
    <property type="entry name" value="LARGE CYSTEINE-RICH PERIPLASMIC PROTEIN OMCB"/>
    <property type="match status" value="1"/>
</dbReference>
<dbReference type="PANTHER" id="PTHR34819:SF4">
    <property type="entry name" value="LARGE CYSTEINE-RICH PERIPLASMIC PROTEIN OMCB"/>
    <property type="match status" value="1"/>
</dbReference>
<dbReference type="Pfam" id="PF03504">
    <property type="entry name" value="Chlam_OMP6"/>
    <property type="match status" value="1"/>
</dbReference>
<dbReference type="Pfam" id="PF01345">
    <property type="entry name" value="DUF11"/>
    <property type="match status" value="2"/>
</dbReference>
<dbReference type="PRINTS" id="PR01336">
    <property type="entry name" value="CHLAMIDIAOM6"/>
</dbReference>
<proteinExistence type="evidence at transcript level"/>
<sequence length="557" mass="59843">MSKLIRRVVTVLALTSMASSFASGKIEAAAAESLATRFIASTENADDNVFQATAKKVRFGRNKNQRQEQKHTEAFCDKEFYPCEGGQCQPVDATQESCYGKMYCVRVNDDCNVEISQSVPEYATVGSPYPIEILAVGKKDCVNVVITQQLPCEVEFVSSDPATTPTSDSKLIWTIDRLGQGEKCKITVWVKPLKEGCCFTAATVCACPELRSYTKCGQPAICIKQEGPECACLRCPVCYKIEVCNTGSAIARNVVVDNPVPDGYTHASGQRVLSFNLGDMRPGDSKCFCVEFCPQKRGKVTNVATVSYCGGHKCSANVTTVVNEPCVQVNISGADWSYVCKPVEYTIVVSNPGDLKLYDVVIEDTAPSGATILEAAGAEICCNKAVWCIKEMCPGETLQFKVVAKAQSPGKFTNQVVVKTNSDCGTCTSCAEVTTHWKGLAATHMCVIDTNDPICVGENTVYRICVTNRGSAEDTNVSLILKFSKELQPVSSSGPTKGTITGNTVVFDALPKLGSKESVEFSVTLKGIAPGDARGEAILSSDTLTVPVADTENTHVY</sequence>
<gene>
    <name type="primary">omcB</name>
    <name type="synonym">envB</name>
</gene>
<name>OMCB_CHLPS</name>
<keyword id="KW-0133">Cell shape</keyword>
<keyword id="KW-1015">Disulfide bond</keyword>
<keyword id="KW-0574">Periplasm</keyword>
<keyword id="KW-0732">Signal</keyword>
<accession>P0CZ18</accession>
<accession>P23701</accession>
<protein>
    <recommendedName>
        <fullName>Large cysteine-rich periplasmic protein omcB</fullName>
        <shortName>Large-CRP</shortName>
    </recommendedName>
    <alternativeName>
        <fullName>60 kDa cysteine-rich OMP</fullName>
    </alternativeName>
    <alternativeName>
        <fullName>60 kDa outer membrane protein</fullName>
    </alternativeName>
    <alternativeName>
        <fullName>Cysteine-rich outer membrane protein</fullName>
    </alternativeName>
    <component>
        <recommendedName>
            <fullName>Large cysteine-rich periplasmic protein omcB-alpha</fullName>
        </recommendedName>
    </component>
    <component>
        <recommendedName>
            <fullName>Large cysteine-rich periplasmic protein omcB-beta</fullName>
        </recommendedName>
    </component>
</protein>
<comment type="function">
    <text evidence="1">In elementary bodies (EBs, the infectious stage, which is able to survive outside the host cell) provides the structural integrity of the outer envelope through disulfide cross-links with the small cysteine-rich protein and the major outer membrane porin. It has been described in publications as the Sarkosyl-insoluble COMC (Chlamydia outer membrane complex), and serves as the functional equivalent of peptidoglycan (By similarity).</text>
</comment>
<comment type="subunit">
    <text evidence="1">Part of a disulfide cross-linked outer membrane complex (COMC) composed of the major outer membrane porin (MOMP), the small cysteine-rich protein (omcA) and the large cysteine-rich periplasmic protein (omcB).</text>
</comment>
<comment type="subcellular location">
    <subcellularLocation>
        <location evidence="1">Periplasm</location>
    </subcellularLocation>
</comment>
<comment type="developmental stage">
    <text evidence="2">It is present but the disulfide bonds are reduced in the intracellular reticulate bodies (RBs).</text>
</comment>
<comment type="caution">
    <text evidence="3">Was thought to be an outer membrane protein as it is part of a disulfide cross-linked complex that is insoluble in the detergent Sarkosyl. In PubMed:7532170 it was shown to likely be periplasmic.</text>
</comment>
<reference key="1">
    <citation type="journal article" date="1990" name="Nucleic Acids Res.">
        <title>The nucleotide sequence of the 60 kDa cysteine rich outer membrane protein of Chlamydia psittaci strain EAE/A22/M.</title>
        <authorList>
            <person name="Watson M.W."/>
            <person name="Lambden P.R."/>
            <person name="Clarke I.N."/>
        </authorList>
    </citation>
    <scope>NUCLEOTIDE SEQUENCE [GENOMIC DNA]</scope>
    <source>
        <strain>A22/M</strain>
    </source>
</reference>
<reference key="2">
    <citation type="journal article" date="1995" name="Microbiology">
        <title>The CrP operon of Chlamydia psittaci and Chlamydia pneumoniae.</title>
        <authorList>
            <person name="Watson M.W."/>
            <person name="Clarke I.N."/>
            <person name="Everson J.S."/>
            <person name="Lambden P.R."/>
        </authorList>
    </citation>
    <scope>NUCLEOTIDE SEQUENCE [GENOMIC DNA]</scope>
    <scope>DEVELOPMENTAL STAGE</scope>
    <source>
        <strain>A22/M</strain>
    </source>
</reference>